<evidence type="ECO:0000255" key="1">
    <source>
        <dbReference type="HAMAP-Rule" id="MF_00446"/>
    </source>
</evidence>
<accession>B5E844</accession>
<sequence>MDRKMLKSKIHRATVTGADLHYEGSITIDLDLMEAADIIPYEAVCIWDVTNGSRFETYAIEGERGSGVICINGAAARLVAPQDLVIIASFVNMENAEAIAHEPKLVFVDDKNRMLESRKEVAGQATLKSVHWKN</sequence>
<keyword id="KW-0068">Autocatalytic cleavage</keyword>
<keyword id="KW-0963">Cytoplasm</keyword>
<keyword id="KW-0210">Decarboxylase</keyword>
<keyword id="KW-0456">Lyase</keyword>
<keyword id="KW-0566">Pantothenate biosynthesis</keyword>
<keyword id="KW-0670">Pyruvate</keyword>
<keyword id="KW-1185">Reference proteome</keyword>
<keyword id="KW-0704">Schiff base</keyword>
<keyword id="KW-0865">Zymogen</keyword>
<gene>
    <name evidence="1" type="primary">panD</name>
    <name type="ordered locus">Gbem_3010</name>
</gene>
<dbReference type="EC" id="4.1.1.11" evidence="1"/>
<dbReference type="EMBL" id="CP001124">
    <property type="protein sequence ID" value="ACH40013.1"/>
    <property type="molecule type" value="Genomic_DNA"/>
</dbReference>
<dbReference type="RefSeq" id="WP_012531443.1">
    <property type="nucleotide sequence ID" value="NC_011146.1"/>
</dbReference>
<dbReference type="SMR" id="B5E844"/>
<dbReference type="STRING" id="404380.Gbem_3010"/>
<dbReference type="KEGG" id="gbm:Gbem_3010"/>
<dbReference type="eggNOG" id="COG0853">
    <property type="taxonomic scope" value="Bacteria"/>
</dbReference>
<dbReference type="HOGENOM" id="CLU_115305_2_0_7"/>
<dbReference type="OrthoDB" id="9803983at2"/>
<dbReference type="UniPathway" id="UPA00028">
    <property type="reaction ID" value="UER00002"/>
</dbReference>
<dbReference type="Proteomes" id="UP000008825">
    <property type="component" value="Chromosome"/>
</dbReference>
<dbReference type="GO" id="GO:0005829">
    <property type="term" value="C:cytosol"/>
    <property type="evidence" value="ECO:0007669"/>
    <property type="project" value="TreeGrafter"/>
</dbReference>
<dbReference type="GO" id="GO:0004068">
    <property type="term" value="F:aspartate 1-decarboxylase activity"/>
    <property type="evidence" value="ECO:0007669"/>
    <property type="project" value="UniProtKB-UniRule"/>
</dbReference>
<dbReference type="GO" id="GO:0006523">
    <property type="term" value="P:alanine biosynthetic process"/>
    <property type="evidence" value="ECO:0007669"/>
    <property type="project" value="InterPro"/>
</dbReference>
<dbReference type="GO" id="GO:0015940">
    <property type="term" value="P:pantothenate biosynthetic process"/>
    <property type="evidence" value="ECO:0007669"/>
    <property type="project" value="UniProtKB-UniRule"/>
</dbReference>
<dbReference type="CDD" id="cd06919">
    <property type="entry name" value="Asp_decarbox"/>
    <property type="match status" value="1"/>
</dbReference>
<dbReference type="Gene3D" id="2.40.40.20">
    <property type="match status" value="1"/>
</dbReference>
<dbReference type="HAMAP" id="MF_00446">
    <property type="entry name" value="PanD"/>
    <property type="match status" value="1"/>
</dbReference>
<dbReference type="InterPro" id="IPR009010">
    <property type="entry name" value="Asp_de-COase-like_dom_sf"/>
</dbReference>
<dbReference type="InterPro" id="IPR003190">
    <property type="entry name" value="Asp_decarbox"/>
</dbReference>
<dbReference type="NCBIfam" id="TIGR00223">
    <property type="entry name" value="panD"/>
    <property type="match status" value="1"/>
</dbReference>
<dbReference type="PANTHER" id="PTHR21012">
    <property type="entry name" value="ASPARTATE 1-DECARBOXYLASE"/>
    <property type="match status" value="1"/>
</dbReference>
<dbReference type="PANTHER" id="PTHR21012:SF0">
    <property type="entry name" value="ASPARTATE 1-DECARBOXYLASE"/>
    <property type="match status" value="1"/>
</dbReference>
<dbReference type="Pfam" id="PF02261">
    <property type="entry name" value="Asp_decarbox"/>
    <property type="match status" value="1"/>
</dbReference>
<dbReference type="PIRSF" id="PIRSF006246">
    <property type="entry name" value="Asp_decarbox"/>
    <property type="match status" value="1"/>
</dbReference>
<dbReference type="SUPFAM" id="SSF50692">
    <property type="entry name" value="ADC-like"/>
    <property type="match status" value="1"/>
</dbReference>
<reference key="1">
    <citation type="submission" date="2008-07" db="EMBL/GenBank/DDBJ databases">
        <title>Complete sequence of Geobacter bemidjiensis BEM.</title>
        <authorList>
            <consortium name="US DOE Joint Genome Institute"/>
            <person name="Lucas S."/>
            <person name="Copeland A."/>
            <person name="Lapidus A."/>
            <person name="Glavina del Rio T."/>
            <person name="Dalin E."/>
            <person name="Tice H."/>
            <person name="Bruce D."/>
            <person name="Goodwin L."/>
            <person name="Pitluck S."/>
            <person name="Kiss H."/>
            <person name="Brettin T."/>
            <person name="Detter J.C."/>
            <person name="Han C."/>
            <person name="Kuske C.R."/>
            <person name="Schmutz J."/>
            <person name="Larimer F."/>
            <person name="Land M."/>
            <person name="Hauser L."/>
            <person name="Kyrpides N."/>
            <person name="Lykidis A."/>
            <person name="Lovley D."/>
            <person name="Richardson P."/>
        </authorList>
    </citation>
    <scope>NUCLEOTIDE SEQUENCE [LARGE SCALE GENOMIC DNA]</scope>
    <source>
        <strain>ATCC BAA-1014 / DSM 16622 / JCM 12645 / Bem</strain>
    </source>
</reference>
<organism>
    <name type="scientific">Citrifermentans bemidjiense (strain ATCC BAA-1014 / DSM 16622 / JCM 12645 / Bem)</name>
    <name type="common">Geobacter bemidjiensis</name>
    <dbReference type="NCBI Taxonomy" id="404380"/>
    <lineage>
        <taxon>Bacteria</taxon>
        <taxon>Pseudomonadati</taxon>
        <taxon>Thermodesulfobacteriota</taxon>
        <taxon>Desulfuromonadia</taxon>
        <taxon>Geobacterales</taxon>
        <taxon>Geobacteraceae</taxon>
        <taxon>Citrifermentans</taxon>
    </lineage>
</organism>
<comment type="function">
    <text evidence="1">Catalyzes the pyruvoyl-dependent decarboxylation of aspartate to produce beta-alanine.</text>
</comment>
<comment type="catalytic activity">
    <reaction evidence="1">
        <text>L-aspartate + H(+) = beta-alanine + CO2</text>
        <dbReference type="Rhea" id="RHEA:19497"/>
        <dbReference type="ChEBI" id="CHEBI:15378"/>
        <dbReference type="ChEBI" id="CHEBI:16526"/>
        <dbReference type="ChEBI" id="CHEBI:29991"/>
        <dbReference type="ChEBI" id="CHEBI:57966"/>
        <dbReference type="EC" id="4.1.1.11"/>
    </reaction>
</comment>
<comment type="cofactor">
    <cofactor evidence="1">
        <name>pyruvate</name>
        <dbReference type="ChEBI" id="CHEBI:15361"/>
    </cofactor>
    <text evidence="1">Binds 1 pyruvoyl group covalently per subunit.</text>
</comment>
<comment type="pathway">
    <text evidence="1">Cofactor biosynthesis; (R)-pantothenate biosynthesis; beta-alanine from L-aspartate: step 1/1.</text>
</comment>
<comment type="subunit">
    <text evidence="1">Heterooctamer of four alpha and four beta subunits.</text>
</comment>
<comment type="subcellular location">
    <subcellularLocation>
        <location evidence="1">Cytoplasm</location>
    </subcellularLocation>
</comment>
<comment type="PTM">
    <text evidence="1">Is synthesized initially as an inactive proenzyme, which is activated by self-cleavage at a specific serine bond to produce a beta-subunit with a hydroxyl group at its C-terminus and an alpha-subunit with a pyruvoyl group at its N-terminus.</text>
</comment>
<comment type="similarity">
    <text evidence="1">Belongs to the PanD family.</text>
</comment>
<protein>
    <recommendedName>
        <fullName evidence="1">Aspartate 1-decarboxylase</fullName>
        <ecNumber evidence="1">4.1.1.11</ecNumber>
    </recommendedName>
    <alternativeName>
        <fullName evidence="1">Aspartate alpha-decarboxylase</fullName>
    </alternativeName>
    <component>
        <recommendedName>
            <fullName evidence="1">Aspartate 1-decarboxylase beta chain</fullName>
        </recommendedName>
    </component>
    <component>
        <recommendedName>
            <fullName evidence="1">Aspartate 1-decarboxylase alpha chain</fullName>
        </recommendedName>
    </component>
</protein>
<proteinExistence type="inferred from homology"/>
<feature type="chain" id="PRO_1000124825" description="Aspartate 1-decarboxylase beta chain" evidence="1">
    <location>
        <begin position="1"/>
        <end position="24"/>
    </location>
</feature>
<feature type="chain" id="PRO_1000124826" description="Aspartate 1-decarboxylase alpha chain" evidence="1">
    <location>
        <begin position="25"/>
        <end position="134"/>
    </location>
</feature>
<feature type="active site" description="Schiff-base intermediate with substrate; via pyruvic acid" evidence="1">
    <location>
        <position position="25"/>
    </location>
</feature>
<feature type="active site" description="Proton donor" evidence="1">
    <location>
        <position position="58"/>
    </location>
</feature>
<feature type="binding site" evidence="1">
    <location>
        <position position="57"/>
    </location>
    <ligand>
        <name>substrate</name>
    </ligand>
</feature>
<feature type="binding site" evidence="1">
    <location>
        <begin position="73"/>
        <end position="75"/>
    </location>
    <ligand>
        <name>substrate</name>
    </ligand>
</feature>
<feature type="modified residue" description="Pyruvic acid (Ser)" evidence="1">
    <location>
        <position position="25"/>
    </location>
</feature>
<name>PAND_CITBB</name>